<gene>
    <name evidence="1" type="primary">pyrE</name>
    <name type="ordered locus">PFL_6056</name>
</gene>
<comment type="function">
    <text evidence="1">Catalyzes the transfer of a ribosyl phosphate group from 5-phosphoribose 1-diphosphate to orotate, leading to the formation of orotidine monophosphate (OMP).</text>
</comment>
<comment type="catalytic activity">
    <reaction evidence="1">
        <text>orotidine 5'-phosphate + diphosphate = orotate + 5-phospho-alpha-D-ribose 1-diphosphate</text>
        <dbReference type="Rhea" id="RHEA:10380"/>
        <dbReference type="ChEBI" id="CHEBI:30839"/>
        <dbReference type="ChEBI" id="CHEBI:33019"/>
        <dbReference type="ChEBI" id="CHEBI:57538"/>
        <dbReference type="ChEBI" id="CHEBI:58017"/>
        <dbReference type="EC" id="2.4.2.10"/>
    </reaction>
</comment>
<comment type="cofactor">
    <cofactor evidence="1">
        <name>Mg(2+)</name>
        <dbReference type="ChEBI" id="CHEBI:18420"/>
    </cofactor>
</comment>
<comment type="pathway">
    <text evidence="1">Pyrimidine metabolism; UMP biosynthesis via de novo pathway; UMP from orotate: step 1/2.</text>
</comment>
<comment type="subunit">
    <text evidence="1">Homodimer.</text>
</comment>
<comment type="similarity">
    <text evidence="1">Belongs to the purine/pyrimidine phosphoribosyltransferase family. PyrE subfamily.</text>
</comment>
<sequence>MQAYQRDFIRFAIDRGVLRFGEFTLKSGRTSPYFFNAGLFNSGSALAQLGRFYAAAIVESGIPFDVLFGPAYKGIPLAAATAVALAEHHQRDLPWCFNRKEAKAHGEGGSLVGAPLTGDVLIIDDVITAGTAIREVMQIIESQDGAKAAGVLIALNRQERGNGELSAIQEVERDFGIPVVSIVSLTQVLQFLADDPALKQHLPAVEAYRAQYGI</sequence>
<name>PYRE_PSEF5</name>
<organism>
    <name type="scientific">Pseudomonas fluorescens (strain ATCC BAA-477 / NRRL B-23932 / Pf-5)</name>
    <dbReference type="NCBI Taxonomy" id="220664"/>
    <lineage>
        <taxon>Bacteria</taxon>
        <taxon>Pseudomonadati</taxon>
        <taxon>Pseudomonadota</taxon>
        <taxon>Gammaproteobacteria</taxon>
        <taxon>Pseudomonadales</taxon>
        <taxon>Pseudomonadaceae</taxon>
        <taxon>Pseudomonas</taxon>
    </lineage>
</organism>
<reference key="1">
    <citation type="journal article" date="2005" name="Nat. Biotechnol.">
        <title>Complete genome sequence of the plant commensal Pseudomonas fluorescens Pf-5.</title>
        <authorList>
            <person name="Paulsen I.T."/>
            <person name="Press C.M."/>
            <person name="Ravel J."/>
            <person name="Kobayashi D.Y."/>
            <person name="Myers G.S.A."/>
            <person name="Mavrodi D.V."/>
            <person name="DeBoy R.T."/>
            <person name="Seshadri R."/>
            <person name="Ren Q."/>
            <person name="Madupu R."/>
            <person name="Dodson R.J."/>
            <person name="Durkin A.S."/>
            <person name="Brinkac L.M."/>
            <person name="Daugherty S.C."/>
            <person name="Sullivan S.A."/>
            <person name="Rosovitz M.J."/>
            <person name="Gwinn M.L."/>
            <person name="Zhou L."/>
            <person name="Schneider D.J."/>
            <person name="Cartinhour S.W."/>
            <person name="Nelson W.C."/>
            <person name="Weidman J."/>
            <person name="Watkins K."/>
            <person name="Tran K."/>
            <person name="Khouri H."/>
            <person name="Pierson E.A."/>
            <person name="Pierson L.S. III"/>
            <person name="Thomashow L.S."/>
            <person name="Loper J.E."/>
        </authorList>
    </citation>
    <scope>NUCLEOTIDE SEQUENCE [LARGE SCALE GENOMIC DNA]</scope>
    <source>
        <strain>ATCC BAA-477 / NRRL B-23932 / Pf-5</strain>
    </source>
</reference>
<proteinExistence type="inferred from homology"/>
<keyword id="KW-0328">Glycosyltransferase</keyword>
<keyword id="KW-0460">Magnesium</keyword>
<keyword id="KW-0665">Pyrimidine biosynthesis</keyword>
<keyword id="KW-0808">Transferase</keyword>
<dbReference type="EC" id="2.4.2.10" evidence="1"/>
<dbReference type="EMBL" id="CP000076">
    <property type="protein sequence ID" value="AAY95244.1"/>
    <property type="molecule type" value="Genomic_DNA"/>
</dbReference>
<dbReference type="RefSeq" id="WP_011064226.1">
    <property type="nucleotide sequence ID" value="NC_004129.6"/>
</dbReference>
<dbReference type="SMR" id="Q4K3R9"/>
<dbReference type="STRING" id="220664.PFL_6056"/>
<dbReference type="GeneID" id="57479015"/>
<dbReference type="KEGG" id="pfl:PFL_6056"/>
<dbReference type="PATRIC" id="fig|220664.5.peg.6183"/>
<dbReference type="eggNOG" id="COG0461">
    <property type="taxonomic scope" value="Bacteria"/>
</dbReference>
<dbReference type="HOGENOM" id="CLU_074878_0_1_6"/>
<dbReference type="UniPathway" id="UPA00070">
    <property type="reaction ID" value="UER00119"/>
</dbReference>
<dbReference type="Proteomes" id="UP000008540">
    <property type="component" value="Chromosome"/>
</dbReference>
<dbReference type="GO" id="GO:0005737">
    <property type="term" value="C:cytoplasm"/>
    <property type="evidence" value="ECO:0007669"/>
    <property type="project" value="TreeGrafter"/>
</dbReference>
<dbReference type="GO" id="GO:0000287">
    <property type="term" value="F:magnesium ion binding"/>
    <property type="evidence" value="ECO:0007669"/>
    <property type="project" value="UniProtKB-UniRule"/>
</dbReference>
<dbReference type="GO" id="GO:0004588">
    <property type="term" value="F:orotate phosphoribosyltransferase activity"/>
    <property type="evidence" value="ECO:0007669"/>
    <property type="project" value="UniProtKB-UniRule"/>
</dbReference>
<dbReference type="GO" id="GO:0006207">
    <property type="term" value="P:'de novo' pyrimidine nucleobase biosynthetic process"/>
    <property type="evidence" value="ECO:0007669"/>
    <property type="project" value="TreeGrafter"/>
</dbReference>
<dbReference type="GO" id="GO:0044205">
    <property type="term" value="P:'de novo' UMP biosynthetic process"/>
    <property type="evidence" value="ECO:0007669"/>
    <property type="project" value="UniProtKB-UniRule"/>
</dbReference>
<dbReference type="GO" id="GO:0046132">
    <property type="term" value="P:pyrimidine ribonucleoside biosynthetic process"/>
    <property type="evidence" value="ECO:0007669"/>
    <property type="project" value="TreeGrafter"/>
</dbReference>
<dbReference type="CDD" id="cd06223">
    <property type="entry name" value="PRTases_typeI"/>
    <property type="match status" value="1"/>
</dbReference>
<dbReference type="FunFam" id="3.40.50.2020:FF:000008">
    <property type="entry name" value="Orotate phosphoribosyltransferase"/>
    <property type="match status" value="1"/>
</dbReference>
<dbReference type="Gene3D" id="3.40.50.2020">
    <property type="match status" value="1"/>
</dbReference>
<dbReference type="HAMAP" id="MF_01208">
    <property type="entry name" value="PyrE"/>
    <property type="match status" value="1"/>
</dbReference>
<dbReference type="InterPro" id="IPR023031">
    <property type="entry name" value="OPRT"/>
</dbReference>
<dbReference type="InterPro" id="IPR004467">
    <property type="entry name" value="Or_phspho_trans_dom"/>
</dbReference>
<dbReference type="InterPro" id="IPR000836">
    <property type="entry name" value="PRibTrfase_dom"/>
</dbReference>
<dbReference type="InterPro" id="IPR029057">
    <property type="entry name" value="PRTase-like"/>
</dbReference>
<dbReference type="NCBIfam" id="TIGR00336">
    <property type="entry name" value="pyrE"/>
    <property type="match status" value="1"/>
</dbReference>
<dbReference type="PANTHER" id="PTHR46683">
    <property type="entry name" value="OROTATE PHOSPHORIBOSYLTRANSFERASE 1-RELATED"/>
    <property type="match status" value="1"/>
</dbReference>
<dbReference type="PANTHER" id="PTHR46683:SF1">
    <property type="entry name" value="OROTATE PHOSPHORIBOSYLTRANSFERASE 1-RELATED"/>
    <property type="match status" value="1"/>
</dbReference>
<dbReference type="Pfam" id="PF00156">
    <property type="entry name" value="Pribosyltran"/>
    <property type="match status" value="1"/>
</dbReference>
<dbReference type="SUPFAM" id="SSF53271">
    <property type="entry name" value="PRTase-like"/>
    <property type="match status" value="1"/>
</dbReference>
<dbReference type="PROSITE" id="PS00103">
    <property type="entry name" value="PUR_PYR_PR_TRANSFER"/>
    <property type="match status" value="1"/>
</dbReference>
<evidence type="ECO:0000255" key="1">
    <source>
        <dbReference type="HAMAP-Rule" id="MF_01208"/>
    </source>
</evidence>
<protein>
    <recommendedName>
        <fullName evidence="1">Orotate phosphoribosyltransferase</fullName>
        <shortName evidence="1">OPRT</shortName>
        <shortName evidence="1">OPRTase</shortName>
        <ecNumber evidence="1">2.4.2.10</ecNumber>
    </recommendedName>
</protein>
<feature type="chain" id="PRO_1000066274" description="Orotate phosphoribosyltransferase">
    <location>
        <begin position="1"/>
        <end position="214"/>
    </location>
</feature>
<feature type="binding site" description="in other chain" evidence="1">
    <location>
        <position position="26"/>
    </location>
    <ligand>
        <name>5-phospho-alpha-D-ribose 1-diphosphate</name>
        <dbReference type="ChEBI" id="CHEBI:58017"/>
        <note>ligand shared between dimeric partners</note>
    </ligand>
</feature>
<feature type="binding site" evidence="1">
    <location>
        <begin position="34"/>
        <end position="35"/>
    </location>
    <ligand>
        <name>orotate</name>
        <dbReference type="ChEBI" id="CHEBI:30839"/>
    </ligand>
</feature>
<feature type="binding site" description="in other chain" evidence="1">
    <location>
        <begin position="72"/>
        <end position="73"/>
    </location>
    <ligand>
        <name>5-phospho-alpha-D-ribose 1-diphosphate</name>
        <dbReference type="ChEBI" id="CHEBI:58017"/>
        <note>ligand shared between dimeric partners</note>
    </ligand>
</feature>
<feature type="binding site" evidence="1">
    <location>
        <position position="99"/>
    </location>
    <ligand>
        <name>5-phospho-alpha-D-ribose 1-diphosphate</name>
        <dbReference type="ChEBI" id="CHEBI:58017"/>
        <note>ligand shared between dimeric partners</note>
    </ligand>
</feature>
<feature type="binding site" description="in other chain" evidence="1">
    <location>
        <position position="100"/>
    </location>
    <ligand>
        <name>5-phospho-alpha-D-ribose 1-diphosphate</name>
        <dbReference type="ChEBI" id="CHEBI:58017"/>
        <note>ligand shared between dimeric partners</note>
    </ligand>
</feature>
<feature type="binding site" evidence="1">
    <location>
        <position position="103"/>
    </location>
    <ligand>
        <name>5-phospho-alpha-D-ribose 1-diphosphate</name>
        <dbReference type="ChEBI" id="CHEBI:58017"/>
        <note>ligand shared between dimeric partners</note>
    </ligand>
</feature>
<feature type="binding site" evidence="1">
    <location>
        <position position="105"/>
    </location>
    <ligand>
        <name>5-phospho-alpha-D-ribose 1-diphosphate</name>
        <dbReference type="ChEBI" id="CHEBI:58017"/>
        <note>ligand shared between dimeric partners</note>
    </ligand>
</feature>
<feature type="binding site" description="in other chain" evidence="1">
    <location>
        <begin position="124"/>
        <end position="132"/>
    </location>
    <ligand>
        <name>5-phospho-alpha-D-ribose 1-diphosphate</name>
        <dbReference type="ChEBI" id="CHEBI:58017"/>
        <note>ligand shared between dimeric partners</note>
    </ligand>
</feature>
<feature type="binding site" evidence="1">
    <location>
        <position position="128"/>
    </location>
    <ligand>
        <name>orotate</name>
        <dbReference type="ChEBI" id="CHEBI:30839"/>
    </ligand>
</feature>
<feature type="binding site" evidence="1">
    <location>
        <position position="157"/>
    </location>
    <ligand>
        <name>orotate</name>
        <dbReference type="ChEBI" id="CHEBI:30839"/>
    </ligand>
</feature>
<accession>Q4K3R9</accession>